<sequence>MRNAKGFTLIELLIVIAIIAILAAVLIPNLLAARKRANDTVVTAYLNDAVKFQEMYQIDNNSYTSNQAALISLGLKSTPANVTFSIVSASANSYCMIAGHSGGTVWFAATPDKGVYKTNTAVTSSQPESCP</sequence>
<accession>Q72JC0</accession>
<feature type="propeptide" id="PRO_0000450706" description="Leader sequence" evidence="2 9">
    <location>
        <begin position="1"/>
        <end position="6"/>
    </location>
</feature>
<feature type="chain" id="PRO_0000450707" description="Type IV wide pilus major component PilA4" evidence="2">
    <location>
        <begin position="7"/>
        <end position="131"/>
    </location>
</feature>
<feature type="transmembrane region" description="Helical" evidence="1">
    <location>
        <begin position="7"/>
        <end position="27"/>
    </location>
</feature>
<feature type="modified residue" description="N-methylphenylalanine" evidence="2">
    <location>
        <position position="7"/>
    </location>
</feature>
<feature type="disulfide bond" evidence="7">
    <location>
        <begin position="95"/>
        <end position="130"/>
    </location>
</feature>
<feature type="helix" evidence="12">
    <location>
        <begin position="9"/>
        <end position="25"/>
    </location>
</feature>
<feature type="helix" evidence="12">
    <location>
        <begin position="30"/>
        <end position="60"/>
    </location>
</feature>
<feature type="helix" evidence="12">
    <location>
        <begin position="67"/>
        <end position="73"/>
    </location>
</feature>
<feature type="strand" evidence="12">
    <location>
        <begin position="85"/>
        <end position="88"/>
    </location>
</feature>
<feature type="strand" evidence="12">
    <location>
        <begin position="95"/>
        <end position="98"/>
    </location>
</feature>
<feature type="strand" evidence="12">
    <location>
        <begin position="103"/>
        <end position="110"/>
    </location>
</feature>
<feature type="turn" evidence="12">
    <location>
        <begin position="111"/>
        <end position="113"/>
    </location>
</feature>
<feature type="strand" evidence="12">
    <location>
        <begin position="114"/>
        <end position="124"/>
    </location>
</feature>
<gene>
    <name type="primary">pilA4</name>
    <name type="ordered locus">TT_C0858</name>
</gene>
<name>PILA4_THET2</name>
<proteinExistence type="evidence at protein level"/>
<organism>
    <name type="scientific">Thermus thermophilus (strain ATCC BAA-163 / DSM 7039 / HB27)</name>
    <dbReference type="NCBI Taxonomy" id="262724"/>
    <lineage>
        <taxon>Bacteria</taxon>
        <taxon>Thermotogati</taxon>
        <taxon>Deinococcota</taxon>
        <taxon>Deinococci</taxon>
        <taxon>Thermales</taxon>
        <taxon>Thermaceae</taxon>
        <taxon>Thermus</taxon>
    </lineage>
</organism>
<dbReference type="EMBL" id="AE017221">
    <property type="protein sequence ID" value="AAS81202.1"/>
    <property type="molecule type" value="Genomic_DNA"/>
</dbReference>
<dbReference type="RefSeq" id="WP_011173287.1">
    <property type="nucleotide sequence ID" value="NC_005835.1"/>
</dbReference>
<dbReference type="PDB" id="6XXD">
    <property type="method" value="EM"/>
    <property type="resolution" value="3.22 A"/>
    <property type="chains" value="A/B/C/D/E/F/G/H/I/J/K/L/M/N/O/P=7-131"/>
</dbReference>
<dbReference type="PDB" id="8QQD">
    <property type="method" value="EM"/>
    <property type="resolution" value="2.40 A"/>
    <property type="chains" value="A/B/C/D/E/F/G/H/I/J/K/L/M/N/O/P/Q/R/S/T/U/V/W/X/Y/Z/a/b/c/d=7-131"/>
</dbReference>
<dbReference type="PDBsum" id="6XXD"/>
<dbReference type="PDBsum" id="8QQD"/>
<dbReference type="EMDB" id="EMD-10647"/>
<dbReference type="EMDB" id="EMD-18588"/>
<dbReference type="SMR" id="Q72JC0"/>
<dbReference type="KEGG" id="tth:TT_C0858"/>
<dbReference type="eggNOG" id="COG2165">
    <property type="taxonomic scope" value="Bacteria"/>
</dbReference>
<dbReference type="HOGENOM" id="CLU_091705_7_4_0"/>
<dbReference type="Proteomes" id="UP000000592">
    <property type="component" value="Chromosome"/>
</dbReference>
<dbReference type="GO" id="GO:0009279">
    <property type="term" value="C:cell outer membrane"/>
    <property type="evidence" value="ECO:0007669"/>
    <property type="project" value="UniProtKB-SubCell"/>
</dbReference>
<dbReference type="GO" id="GO:0042597">
    <property type="term" value="C:periplasmic space"/>
    <property type="evidence" value="ECO:0007669"/>
    <property type="project" value="UniProtKB-SubCell"/>
</dbReference>
<dbReference type="GO" id="GO:0005886">
    <property type="term" value="C:plasma membrane"/>
    <property type="evidence" value="ECO:0007669"/>
    <property type="project" value="UniProtKB-SubCell"/>
</dbReference>
<dbReference type="GO" id="GO:0015627">
    <property type="term" value="C:type II protein secretion system complex"/>
    <property type="evidence" value="ECO:0007669"/>
    <property type="project" value="InterPro"/>
</dbReference>
<dbReference type="GO" id="GO:0015628">
    <property type="term" value="P:protein secretion by the type II secretion system"/>
    <property type="evidence" value="ECO:0007669"/>
    <property type="project" value="InterPro"/>
</dbReference>
<dbReference type="Gene3D" id="3.30.700.10">
    <property type="entry name" value="Glycoprotein, Type 4 Pilin"/>
    <property type="match status" value="1"/>
</dbReference>
<dbReference type="InterPro" id="IPR000983">
    <property type="entry name" value="Bac_GSPG_pilin"/>
</dbReference>
<dbReference type="InterPro" id="IPR012902">
    <property type="entry name" value="N_methyl_site"/>
</dbReference>
<dbReference type="InterPro" id="IPR045584">
    <property type="entry name" value="Pilin-like"/>
</dbReference>
<dbReference type="InterPro" id="IPR050470">
    <property type="entry name" value="T4P/T2SS_Core"/>
</dbReference>
<dbReference type="NCBIfam" id="TIGR02532">
    <property type="entry name" value="IV_pilin_GFxxxE"/>
    <property type="match status" value="1"/>
</dbReference>
<dbReference type="PANTHER" id="PTHR30093">
    <property type="entry name" value="GENERAL SECRETION PATHWAY PROTEIN G"/>
    <property type="match status" value="1"/>
</dbReference>
<dbReference type="PANTHER" id="PTHR30093:SF44">
    <property type="entry name" value="TYPE II SECRETION SYSTEM CORE PROTEIN G"/>
    <property type="match status" value="1"/>
</dbReference>
<dbReference type="Pfam" id="PF07963">
    <property type="entry name" value="N_methyl"/>
    <property type="match status" value="1"/>
</dbReference>
<dbReference type="PRINTS" id="PR00813">
    <property type="entry name" value="BCTERIALGSPG"/>
</dbReference>
<dbReference type="SUPFAM" id="SSF54523">
    <property type="entry name" value="Pili subunits"/>
    <property type="match status" value="1"/>
</dbReference>
<dbReference type="PROSITE" id="PS00409">
    <property type="entry name" value="PROKAR_NTER_METHYL"/>
    <property type="match status" value="1"/>
</dbReference>
<protein>
    <recommendedName>
        <fullName evidence="8">Type IV wide pilus major component PilA4</fullName>
    </recommendedName>
    <alternativeName>
        <fullName>Type IV major pilin PilA4</fullName>
    </alternativeName>
</protein>
<keyword id="KW-0002">3D-structure</keyword>
<keyword id="KW-0997">Cell inner membrane</keyword>
<keyword id="KW-1003">Cell membrane</keyword>
<keyword id="KW-0998">Cell outer membrane</keyword>
<keyword id="KW-1015">Disulfide bond</keyword>
<keyword id="KW-0325">Glycoprotein</keyword>
<keyword id="KW-0472">Membrane</keyword>
<keyword id="KW-0488">Methylation</keyword>
<keyword id="KW-0574">Periplasm</keyword>
<keyword id="KW-0812">Transmembrane</keyword>
<keyword id="KW-1133">Transmembrane helix</keyword>
<comment type="function">
    <text evidence="3 4 5 7">Plays an essential role in the assembly of two types of T4P pili: a wide and a narrow that participate in natural transformation and twitching motility (PubMed:32376942). Major component of the wide pilus that is essential for natural transformation working as a DNA translocator structure that spans the inner and outer membranes (PubMed:12839734, PubMed:16857013, PubMed:19396940, PubMed:32376942). In addition, participates in the assembly of the narrow pilus composed of the PilA5 subunit that is required for twitching motility (PubMed:32376942).</text>
</comment>
<comment type="subunit">
    <text evidence="4">Interacts with PilQ.</text>
</comment>
<comment type="subcellular location">
    <subcellularLocation>
        <location evidence="4">Cell inner membrane</location>
        <topology evidence="1">Single-pass membrane protein</topology>
    </subcellularLocation>
    <subcellularLocation>
        <location evidence="4">Cell outer membrane</location>
        <topology evidence="1">Single-pass membrane protein</topology>
    </subcellularLocation>
    <subcellularLocation>
        <location evidence="4">Periplasm</location>
    </subcellularLocation>
    <text evidence="10">The single N-terminal transmembrane is initially involved in the correct localization to the inner membrane. Once the leader sequence cleaved, this region plays a role in multimerization and protein-protein interactions in the periplasm and the outer membrane.</text>
</comment>
<comment type="induction">
    <text evidence="6">By growth in minimal medium or low temperature leading to a significant increase in pilA4 transcripts.</text>
</comment>
<comment type="PTM">
    <text evidence="4 7">Found in three forms of 14-kDa, 18-kDa and a glycosylated 23-kDa form (PubMed:16857013). Both narrow and wide pili are glycosylated (PubMed:32376942).</text>
</comment>
<comment type="disruption phenotype">
    <text evidence="3 7">Deletion mutants show defect in both DNA transformation and twitching motility.</text>
</comment>
<evidence type="ECO:0000255" key="1"/>
<evidence type="ECO:0000255" key="2">
    <source>
        <dbReference type="PROSITE-ProRule" id="PRU01070"/>
    </source>
</evidence>
<evidence type="ECO:0000269" key="3">
    <source>
    </source>
</evidence>
<evidence type="ECO:0000269" key="4">
    <source>
    </source>
</evidence>
<evidence type="ECO:0000269" key="5">
    <source>
    </source>
</evidence>
<evidence type="ECO:0000269" key="6">
    <source>
    </source>
</evidence>
<evidence type="ECO:0000269" key="7">
    <source>
    </source>
</evidence>
<evidence type="ECO:0000303" key="8">
    <source>
    </source>
</evidence>
<evidence type="ECO:0000305" key="9"/>
<evidence type="ECO:0000305" key="10">
    <source>
    </source>
</evidence>
<evidence type="ECO:0007744" key="11">
    <source>
        <dbReference type="PDB" id="6XXD"/>
    </source>
</evidence>
<evidence type="ECO:0007829" key="12">
    <source>
        <dbReference type="PDB" id="6XXD"/>
    </source>
</evidence>
<reference key="1">
    <citation type="journal article" date="2004" name="Nat. Biotechnol.">
        <title>The genome sequence of the extreme thermophile Thermus thermophilus.</title>
        <authorList>
            <person name="Henne A."/>
            <person name="Brueggemann H."/>
            <person name="Raasch C."/>
            <person name="Wiezer A."/>
            <person name="Hartsch T."/>
            <person name="Liesegang H."/>
            <person name="Johann A."/>
            <person name="Lienard T."/>
            <person name="Gohl O."/>
            <person name="Martinez-Arias R."/>
            <person name="Jacobi C."/>
            <person name="Starkuviene V."/>
            <person name="Schlenczeck S."/>
            <person name="Dencker S."/>
            <person name="Huber R."/>
            <person name="Klenk H.-P."/>
            <person name="Kramer W."/>
            <person name="Merkl R."/>
            <person name="Gottschalk G."/>
            <person name="Fritz H.-J."/>
        </authorList>
    </citation>
    <scope>NUCLEOTIDE SEQUENCE [LARGE SCALE GENOMIC DNA]</scope>
    <source>
        <strain>ATCC BAA-163 / DSM 7039 / HB27</strain>
    </source>
</reference>
<reference key="2">
    <citation type="journal article" date="2003" name="Appl. Environ. Microbiol.">
        <title>Pilin-like proteins in the extremely thermophilic bacterium Thermus thermophilus HB27: implication in competence for natural transformation and links to type IV pilus biogenesis.</title>
        <authorList>
            <person name="Friedrich A."/>
            <person name="Rumszauer J."/>
            <person name="Henne A."/>
            <person name="Averhoff B."/>
        </authorList>
    </citation>
    <scope>FUNCTION</scope>
    <scope>DISRUPTION PHENOTYPE</scope>
</reference>
<reference key="3">
    <citation type="journal article" date="2006" name="FEBS J.">
        <title>Identification, subcellular localization and functional interactions of PilMNOWQ and PilA4 involved in transformation competency and pilus biogenesis in the thermophilic bacterium Thermus thermophilus HB27.</title>
        <authorList>
            <person name="Rumszauer J."/>
            <person name="Schwarzenlander C."/>
            <person name="Averhoff B."/>
        </authorList>
    </citation>
    <scope>FUNCTION</scope>
    <scope>GLYCOSYLATION</scope>
    <scope>SUBCELLULAR LOCATION</scope>
    <scope>INTERACTION WITH PILQ</scope>
</reference>
<reference key="4">
    <citation type="journal article" date="2009" name="Environ. Microbiol.">
        <title>The role of single subunits of the DNA transport machinery of Thermus thermophilus HB27 in DNA binding and transport.</title>
        <authorList>
            <person name="Schwarzenlander C."/>
            <person name="Haase W."/>
            <person name="Averhoff B."/>
        </authorList>
    </citation>
    <scope>FUNCTION</scope>
</reference>
<reference key="5">
    <citation type="journal article" date="2014" name="FEMS Microbiol. Lett.">
        <title>Environmental factors affecting the expression of type IV pilus genes as well as piliation of Thermus thermophilus.</title>
        <authorList>
            <person name="Salzer R."/>
            <person name="Kern T."/>
            <person name="Joos F."/>
            <person name="Averhoff B."/>
        </authorList>
    </citation>
    <scope>INDUCTION BY LOW TEMPERATURE</scope>
</reference>
<reference evidence="11" key="6">
    <citation type="journal article" date="2020" name="Nat. Commun.">
        <title>Cryo-electron microscopy reveals two distinct type IV pili assembled by the same bacterium.</title>
        <authorList>
            <person name="Neuhaus A."/>
            <person name="Selvaraj M."/>
            <person name="Salzer R."/>
            <person name="Langer J.D."/>
            <person name="Kruse K."/>
            <person name="Kirchner L."/>
            <person name="Sanders K."/>
            <person name="Daum B."/>
            <person name="Averhoff B."/>
            <person name="Gold V.A.M."/>
        </authorList>
    </citation>
    <scope>STRUCTURE BY ELECTRON MICROSCOPY (3.22 ANGSTROMS) OF 7-121</scope>
    <scope>DISRUPTION PHENOTYPE</scope>
    <scope>GLYCOSYLATION</scope>
    <scope>FUNCTION</scope>
    <scope>DISULFIDE BOND</scope>
</reference>